<evidence type="ECO:0000255" key="1">
    <source>
        <dbReference type="HAMAP-Rule" id="MF_01586"/>
    </source>
</evidence>
<accession>B4EZM4</accession>
<dbReference type="EMBL" id="AM942759">
    <property type="protein sequence ID" value="CAR45757.1"/>
    <property type="molecule type" value="Genomic_DNA"/>
</dbReference>
<dbReference type="RefSeq" id="WP_012368552.1">
    <property type="nucleotide sequence ID" value="NC_010554.1"/>
</dbReference>
<dbReference type="SMR" id="B4EZM4"/>
<dbReference type="EnsemblBacteria" id="CAR45757">
    <property type="protein sequence ID" value="CAR45757"/>
    <property type="gene ID" value="PMI2922"/>
</dbReference>
<dbReference type="GeneID" id="6800441"/>
<dbReference type="KEGG" id="pmr:PMI2922"/>
<dbReference type="PATRIC" id="fig|529507.6.peg.2853"/>
<dbReference type="eggNOG" id="ENOG50330S2">
    <property type="taxonomic scope" value="Bacteria"/>
</dbReference>
<dbReference type="HOGENOM" id="CLU_189182_0_0_6"/>
<dbReference type="Proteomes" id="UP000008319">
    <property type="component" value="Chromosome"/>
</dbReference>
<dbReference type="GO" id="GO:0003677">
    <property type="term" value="F:DNA binding"/>
    <property type="evidence" value="ECO:0007669"/>
    <property type="project" value="UniProtKB-KW"/>
</dbReference>
<dbReference type="GO" id="GO:0005506">
    <property type="term" value="F:iron ion binding"/>
    <property type="evidence" value="ECO:0007669"/>
    <property type="project" value="UniProtKB-UniRule"/>
</dbReference>
<dbReference type="GO" id="GO:0051536">
    <property type="term" value="F:iron-sulfur cluster binding"/>
    <property type="evidence" value="ECO:0007669"/>
    <property type="project" value="UniProtKB-KW"/>
</dbReference>
<dbReference type="Gene3D" id="1.10.10.10">
    <property type="entry name" value="Winged helix-like DNA-binding domain superfamily/Winged helix DNA-binding domain"/>
    <property type="match status" value="1"/>
</dbReference>
<dbReference type="HAMAP" id="MF_01586">
    <property type="entry name" value="FeoC"/>
    <property type="match status" value="1"/>
</dbReference>
<dbReference type="InterPro" id="IPR023732">
    <property type="entry name" value="FeoC"/>
</dbReference>
<dbReference type="InterPro" id="IPR015102">
    <property type="entry name" value="Tscrpt_reg_HTH_FeoC"/>
</dbReference>
<dbReference type="InterPro" id="IPR036388">
    <property type="entry name" value="WH-like_DNA-bd_sf"/>
</dbReference>
<dbReference type="InterPro" id="IPR036390">
    <property type="entry name" value="WH_DNA-bd_sf"/>
</dbReference>
<dbReference type="Pfam" id="PF09012">
    <property type="entry name" value="FeoC"/>
    <property type="match status" value="1"/>
</dbReference>
<dbReference type="SUPFAM" id="SSF46785">
    <property type="entry name" value="Winged helix' DNA-binding domain"/>
    <property type="match status" value="1"/>
</dbReference>
<keyword id="KW-0238">DNA-binding</keyword>
<keyword id="KW-0408">Iron</keyword>
<keyword id="KW-0411">Iron-sulfur</keyword>
<keyword id="KW-0479">Metal-binding</keyword>
<keyword id="KW-1185">Reference proteome</keyword>
<keyword id="KW-0678">Repressor</keyword>
<keyword id="KW-0804">Transcription</keyword>
<keyword id="KW-0805">Transcription regulation</keyword>
<reference key="1">
    <citation type="journal article" date="2008" name="J. Bacteriol.">
        <title>Complete genome sequence of uropathogenic Proteus mirabilis, a master of both adherence and motility.</title>
        <authorList>
            <person name="Pearson M.M."/>
            <person name="Sebaihia M."/>
            <person name="Churcher C."/>
            <person name="Quail M.A."/>
            <person name="Seshasayee A.S."/>
            <person name="Luscombe N.M."/>
            <person name="Abdellah Z."/>
            <person name="Arrosmith C."/>
            <person name="Atkin B."/>
            <person name="Chillingworth T."/>
            <person name="Hauser H."/>
            <person name="Jagels K."/>
            <person name="Moule S."/>
            <person name="Mungall K."/>
            <person name="Norbertczak H."/>
            <person name="Rabbinowitsch E."/>
            <person name="Walker D."/>
            <person name="Whithead S."/>
            <person name="Thomson N.R."/>
            <person name="Rather P.N."/>
            <person name="Parkhill J."/>
            <person name="Mobley H.L.T."/>
        </authorList>
    </citation>
    <scope>NUCLEOTIDE SEQUENCE [LARGE SCALE GENOMIC DNA]</scope>
    <source>
        <strain>HI4320</strain>
    </source>
</reference>
<proteinExistence type="inferred from homology"/>
<comment type="function">
    <text evidence="1">May function as a transcriptional regulator that controls feoABC expression.</text>
</comment>
<comment type="similarity">
    <text evidence="1">Belongs to the FeoC family.</text>
</comment>
<protein>
    <recommendedName>
        <fullName evidence="1">Probable [Fe-S]-dependent transcriptional repressor</fullName>
    </recommendedName>
</protein>
<feature type="chain" id="PRO_1000201329" description="Probable [Fe-S]-dependent transcriptional repressor">
    <location>
        <begin position="1"/>
        <end position="77"/>
    </location>
</feature>
<feature type="binding site" evidence="1">
    <location>
        <position position="54"/>
    </location>
    <ligand>
        <name>iron-sulfur cluster</name>
        <dbReference type="ChEBI" id="CHEBI:30408"/>
    </ligand>
</feature>
<feature type="binding site" evidence="1">
    <location>
        <position position="59"/>
    </location>
    <ligand>
        <name>iron-sulfur cluster</name>
        <dbReference type="ChEBI" id="CHEBI:30408"/>
    </ligand>
</feature>
<feature type="binding site" evidence="1">
    <location>
        <position position="62"/>
    </location>
    <ligand>
        <name>iron-sulfur cluster</name>
        <dbReference type="ChEBI" id="CHEBI:30408"/>
    </ligand>
</feature>
<feature type="binding site" evidence="1">
    <location>
        <position position="68"/>
    </location>
    <ligand>
        <name>iron-sulfur cluster</name>
        <dbReference type="ChEBI" id="CHEBI:30408"/>
    </ligand>
</feature>
<gene>
    <name evidence="1" type="primary">feoC</name>
    <name type="ordered locus">PMI2922</name>
</gene>
<organism>
    <name type="scientific">Proteus mirabilis (strain HI4320)</name>
    <dbReference type="NCBI Taxonomy" id="529507"/>
    <lineage>
        <taxon>Bacteria</taxon>
        <taxon>Pseudomonadati</taxon>
        <taxon>Pseudomonadota</taxon>
        <taxon>Gammaproteobacteria</taxon>
        <taxon>Enterobacterales</taxon>
        <taxon>Morganellaceae</taxon>
        <taxon>Proteus</taxon>
    </lineage>
</organism>
<sequence length="77" mass="8528">MASLMQVRDCVALNGRADARLVSHQLNMPEPMVKAMLERLTLMGKLEEVDVEECLVGSCKSCPEATACQTKVYQLRS</sequence>
<name>FEOC_PROMH</name>